<name>IXTPA_ANADF</name>
<protein>
    <recommendedName>
        <fullName evidence="1">dITP/XTP pyrophosphatase</fullName>
        <ecNumber evidence="1">3.6.1.66</ecNumber>
    </recommendedName>
    <alternativeName>
        <fullName evidence="1">Non-canonical purine NTP pyrophosphatase</fullName>
    </alternativeName>
    <alternativeName>
        <fullName evidence="1">Non-standard purine NTP pyrophosphatase</fullName>
    </alternativeName>
    <alternativeName>
        <fullName evidence="1">Nucleoside-triphosphate diphosphatase</fullName>
    </alternativeName>
    <alternativeName>
        <fullName evidence="1">Nucleoside-triphosphate pyrophosphatase</fullName>
        <shortName evidence="1">NTPase</shortName>
    </alternativeName>
</protein>
<comment type="function">
    <text evidence="1">Pyrophosphatase that catalyzes the hydrolysis of nucleoside triphosphates to their monophosphate derivatives, with a high preference for the non-canonical purine nucleotides XTP (xanthosine triphosphate), dITP (deoxyinosine triphosphate) and ITP. Seems to function as a house-cleaning enzyme that removes non-canonical purine nucleotides from the nucleotide pool, thus preventing their incorporation into DNA/RNA and avoiding chromosomal lesions.</text>
</comment>
<comment type="catalytic activity">
    <reaction evidence="1">
        <text>XTP + H2O = XMP + diphosphate + H(+)</text>
        <dbReference type="Rhea" id="RHEA:28610"/>
        <dbReference type="ChEBI" id="CHEBI:15377"/>
        <dbReference type="ChEBI" id="CHEBI:15378"/>
        <dbReference type="ChEBI" id="CHEBI:33019"/>
        <dbReference type="ChEBI" id="CHEBI:57464"/>
        <dbReference type="ChEBI" id="CHEBI:61314"/>
        <dbReference type="EC" id="3.6.1.66"/>
    </reaction>
</comment>
<comment type="catalytic activity">
    <reaction evidence="1">
        <text>dITP + H2O = dIMP + diphosphate + H(+)</text>
        <dbReference type="Rhea" id="RHEA:28342"/>
        <dbReference type="ChEBI" id="CHEBI:15377"/>
        <dbReference type="ChEBI" id="CHEBI:15378"/>
        <dbReference type="ChEBI" id="CHEBI:33019"/>
        <dbReference type="ChEBI" id="CHEBI:61194"/>
        <dbReference type="ChEBI" id="CHEBI:61382"/>
        <dbReference type="EC" id="3.6.1.66"/>
    </reaction>
</comment>
<comment type="catalytic activity">
    <reaction evidence="1">
        <text>ITP + H2O = IMP + diphosphate + H(+)</text>
        <dbReference type="Rhea" id="RHEA:29399"/>
        <dbReference type="ChEBI" id="CHEBI:15377"/>
        <dbReference type="ChEBI" id="CHEBI:15378"/>
        <dbReference type="ChEBI" id="CHEBI:33019"/>
        <dbReference type="ChEBI" id="CHEBI:58053"/>
        <dbReference type="ChEBI" id="CHEBI:61402"/>
        <dbReference type="EC" id="3.6.1.66"/>
    </reaction>
</comment>
<comment type="cofactor">
    <cofactor evidence="1">
        <name>Mg(2+)</name>
        <dbReference type="ChEBI" id="CHEBI:18420"/>
    </cofactor>
    <text evidence="1">Binds 1 Mg(2+) ion per subunit.</text>
</comment>
<comment type="subunit">
    <text evidence="1">Homodimer.</text>
</comment>
<comment type="similarity">
    <text evidence="1">Belongs to the HAM1 NTPase family.</text>
</comment>
<dbReference type="EC" id="3.6.1.66" evidence="1"/>
<dbReference type="EMBL" id="CP000769">
    <property type="protein sequence ID" value="ABS27608.1"/>
    <property type="molecule type" value="Genomic_DNA"/>
</dbReference>
<dbReference type="RefSeq" id="WP_012098228.1">
    <property type="nucleotide sequence ID" value="NC_009675.1"/>
</dbReference>
<dbReference type="SMR" id="A7HFW2"/>
<dbReference type="STRING" id="404589.Anae109_3424"/>
<dbReference type="KEGG" id="afw:Anae109_3424"/>
<dbReference type="eggNOG" id="COG0127">
    <property type="taxonomic scope" value="Bacteria"/>
</dbReference>
<dbReference type="HOGENOM" id="CLU_082080_0_1_7"/>
<dbReference type="Proteomes" id="UP000006382">
    <property type="component" value="Chromosome"/>
</dbReference>
<dbReference type="GO" id="GO:0005829">
    <property type="term" value="C:cytosol"/>
    <property type="evidence" value="ECO:0007669"/>
    <property type="project" value="TreeGrafter"/>
</dbReference>
<dbReference type="GO" id="GO:0035870">
    <property type="term" value="F:dITP diphosphatase activity"/>
    <property type="evidence" value="ECO:0007669"/>
    <property type="project" value="RHEA"/>
</dbReference>
<dbReference type="GO" id="GO:0036220">
    <property type="term" value="F:ITP diphosphatase activity"/>
    <property type="evidence" value="ECO:0007669"/>
    <property type="project" value="UniProtKB-EC"/>
</dbReference>
<dbReference type="GO" id="GO:0046872">
    <property type="term" value="F:metal ion binding"/>
    <property type="evidence" value="ECO:0007669"/>
    <property type="project" value="UniProtKB-KW"/>
</dbReference>
<dbReference type="GO" id="GO:0000166">
    <property type="term" value="F:nucleotide binding"/>
    <property type="evidence" value="ECO:0007669"/>
    <property type="project" value="UniProtKB-KW"/>
</dbReference>
<dbReference type="GO" id="GO:0017111">
    <property type="term" value="F:ribonucleoside triphosphate phosphatase activity"/>
    <property type="evidence" value="ECO:0007669"/>
    <property type="project" value="InterPro"/>
</dbReference>
<dbReference type="GO" id="GO:0036222">
    <property type="term" value="F:XTP diphosphatase activity"/>
    <property type="evidence" value="ECO:0007669"/>
    <property type="project" value="RHEA"/>
</dbReference>
<dbReference type="GO" id="GO:0009117">
    <property type="term" value="P:nucleotide metabolic process"/>
    <property type="evidence" value="ECO:0007669"/>
    <property type="project" value="UniProtKB-KW"/>
</dbReference>
<dbReference type="GO" id="GO:0009146">
    <property type="term" value="P:purine nucleoside triphosphate catabolic process"/>
    <property type="evidence" value="ECO:0007669"/>
    <property type="project" value="UniProtKB-UniRule"/>
</dbReference>
<dbReference type="CDD" id="cd00515">
    <property type="entry name" value="HAM1"/>
    <property type="match status" value="1"/>
</dbReference>
<dbReference type="Gene3D" id="3.90.950.10">
    <property type="match status" value="1"/>
</dbReference>
<dbReference type="HAMAP" id="MF_01405">
    <property type="entry name" value="Non_canon_purine_NTPase"/>
    <property type="match status" value="1"/>
</dbReference>
<dbReference type="InterPro" id="IPR020922">
    <property type="entry name" value="dITP/XTP_pyrophosphatase"/>
</dbReference>
<dbReference type="InterPro" id="IPR029001">
    <property type="entry name" value="ITPase-like_fam"/>
</dbReference>
<dbReference type="InterPro" id="IPR002637">
    <property type="entry name" value="RdgB/HAM1"/>
</dbReference>
<dbReference type="NCBIfam" id="TIGR00042">
    <property type="entry name" value="RdgB/HAM1 family non-canonical purine NTP pyrophosphatase"/>
    <property type="match status" value="1"/>
</dbReference>
<dbReference type="PANTHER" id="PTHR11067:SF9">
    <property type="entry name" value="INOSINE TRIPHOSPHATE PYROPHOSPHATASE"/>
    <property type="match status" value="1"/>
</dbReference>
<dbReference type="PANTHER" id="PTHR11067">
    <property type="entry name" value="INOSINE TRIPHOSPHATE PYROPHOSPHATASE/HAM1 PROTEIN"/>
    <property type="match status" value="1"/>
</dbReference>
<dbReference type="Pfam" id="PF01725">
    <property type="entry name" value="Ham1p_like"/>
    <property type="match status" value="2"/>
</dbReference>
<dbReference type="SUPFAM" id="SSF52972">
    <property type="entry name" value="ITPase-like"/>
    <property type="match status" value="1"/>
</dbReference>
<organism>
    <name type="scientific">Anaeromyxobacter sp. (strain Fw109-5)</name>
    <dbReference type="NCBI Taxonomy" id="404589"/>
    <lineage>
        <taxon>Bacteria</taxon>
        <taxon>Pseudomonadati</taxon>
        <taxon>Myxococcota</taxon>
        <taxon>Myxococcia</taxon>
        <taxon>Myxococcales</taxon>
        <taxon>Cystobacterineae</taxon>
        <taxon>Anaeromyxobacteraceae</taxon>
        <taxon>Anaeromyxobacter</taxon>
    </lineage>
</organism>
<gene>
    <name type="ordered locus">Anae109_3424</name>
</gene>
<feature type="chain" id="PRO_1000068408" description="dITP/XTP pyrophosphatase">
    <location>
        <begin position="1"/>
        <end position="230"/>
    </location>
</feature>
<feature type="active site" description="Proton acceptor" evidence="1">
    <location>
        <position position="70"/>
    </location>
</feature>
<feature type="binding site" evidence="1">
    <location>
        <begin position="7"/>
        <end position="12"/>
    </location>
    <ligand>
        <name>substrate</name>
    </ligand>
</feature>
<feature type="binding site" evidence="1">
    <location>
        <position position="41"/>
    </location>
    <ligand>
        <name>Mg(2+)</name>
        <dbReference type="ChEBI" id="CHEBI:18420"/>
    </ligand>
</feature>
<feature type="binding site" evidence="1">
    <location>
        <position position="70"/>
    </location>
    <ligand>
        <name>Mg(2+)</name>
        <dbReference type="ChEBI" id="CHEBI:18420"/>
    </ligand>
</feature>
<feature type="binding site" evidence="1">
    <location>
        <position position="71"/>
    </location>
    <ligand>
        <name>substrate</name>
    </ligand>
</feature>
<feature type="binding site" evidence="1">
    <location>
        <begin position="181"/>
        <end position="184"/>
    </location>
    <ligand>
        <name>substrate</name>
    </ligand>
</feature>
<feature type="binding site" evidence="1">
    <location>
        <position position="205"/>
    </location>
    <ligand>
        <name>substrate</name>
    </ligand>
</feature>
<feature type="binding site" evidence="1">
    <location>
        <begin position="210"/>
        <end position="211"/>
    </location>
    <ligand>
        <name>substrate</name>
    </ligand>
</feature>
<accession>A7HFW2</accession>
<reference key="1">
    <citation type="journal article" date="2015" name="Genome Announc.">
        <title>Complete genome sequence of Anaeromyxobacter sp. Fw109-5, an anaerobic, metal-reducing bacterium isolated from a contaminated subsurface environment.</title>
        <authorList>
            <person name="Hwang C."/>
            <person name="Copeland A."/>
            <person name="Lucas S."/>
            <person name="Lapidus A."/>
            <person name="Barry K."/>
            <person name="Glavina Del Rio T."/>
            <person name="Dalin E."/>
            <person name="Tice H."/>
            <person name="Pitluck S."/>
            <person name="Sims D."/>
            <person name="Brettin T."/>
            <person name="Bruce D.C."/>
            <person name="Detter J.C."/>
            <person name="Han C.S."/>
            <person name="Schmutz J."/>
            <person name="Larimer F.W."/>
            <person name="Land M.L."/>
            <person name="Hauser L.J."/>
            <person name="Kyrpides N."/>
            <person name="Lykidis A."/>
            <person name="Richardson P."/>
            <person name="Belieav A."/>
            <person name="Sanford R.A."/>
            <person name="Loeffler F.E."/>
            <person name="Fields M.W."/>
        </authorList>
    </citation>
    <scope>NUCLEOTIDE SEQUENCE [LARGE SCALE GENOMIC DNA]</scope>
    <source>
        <strain>Fw109-5</strain>
    </source>
</reference>
<keyword id="KW-0378">Hydrolase</keyword>
<keyword id="KW-0460">Magnesium</keyword>
<keyword id="KW-0479">Metal-binding</keyword>
<keyword id="KW-0546">Nucleotide metabolism</keyword>
<keyword id="KW-0547">Nucleotide-binding</keyword>
<keyword id="KW-1185">Reference proteome</keyword>
<evidence type="ECO:0000255" key="1">
    <source>
        <dbReference type="HAMAP-Rule" id="MF_01405"/>
    </source>
</evidence>
<sequence>MDLLFASTNPGKLKELRRLVAGLPIRVVSPDELPRALPEVEEDGATFQANAEKKASTYARLAGMAALADDSGLAVDALGGAPGVRSARWSDEEPGPAPASPVCDLAEAAAAELGPVAGRGARDERNNDKLLRSLAGLPDERRGAQYEAVLAVARADGSLVASVAGVCRGRIGHARRGTGGFGYDPLFVPDGQGGRTMAELSAEEKDAISHRGDAFRRIRSLLERLAREGA</sequence>
<proteinExistence type="inferred from homology"/>